<gene>
    <name evidence="1" type="primary">rpoB</name>
    <name type="ordered locus">LOC_Osp1g00240</name>
    <name type="ORF">Nip036</name>
</gene>
<organism>
    <name type="scientific">Oryza sativa subsp. japonica</name>
    <name type="common">Rice</name>
    <dbReference type="NCBI Taxonomy" id="39947"/>
    <lineage>
        <taxon>Eukaryota</taxon>
        <taxon>Viridiplantae</taxon>
        <taxon>Streptophyta</taxon>
        <taxon>Embryophyta</taxon>
        <taxon>Tracheophyta</taxon>
        <taxon>Spermatophyta</taxon>
        <taxon>Magnoliopsida</taxon>
        <taxon>Liliopsida</taxon>
        <taxon>Poales</taxon>
        <taxon>Poaceae</taxon>
        <taxon>BOP clade</taxon>
        <taxon>Oryzoideae</taxon>
        <taxon>Oryzeae</taxon>
        <taxon>Oryzinae</taxon>
        <taxon>Oryza</taxon>
        <taxon>Oryza sativa</taxon>
    </lineage>
</organism>
<name>RPOB_ORYSJ</name>
<geneLocation type="chloroplast"/>
<protein>
    <recommendedName>
        <fullName evidence="1">DNA-directed RNA polymerase subunit beta</fullName>
        <ecNumber evidence="1">2.7.7.6</ecNumber>
    </recommendedName>
    <alternativeName>
        <fullName evidence="1">PEP</fullName>
    </alternativeName>
    <alternativeName>
        <fullName evidence="1">Plastid-encoded RNA polymerase subunit beta</fullName>
        <shortName evidence="1">RNA polymerase subunit beta</shortName>
    </alternativeName>
</protein>
<keyword id="KW-0150">Chloroplast</keyword>
<keyword id="KW-0240">DNA-directed RNA polymerase</keyword>
<keyword id="KW-0548">Nucleotidyltransferase</keyword>
<keyword id="KW-0934">Plastid</keyword>
<keyword id="KW-1185">Reference proteome</keyword>
<keyword id="KW-0804">Transcription</keyword>
<keyword id="KW-0808">Transferase</keyword>
<feature type="chain" id="PRO_0000290094" description="DNA-directed RNA polymerase subunit beta">
    <location>
        <begin position="1"/>
        <end position="1075"/>
    </location>
</feature>
<evidence type="ECO:0000255" key="1">
    <source>
        <dbReference type="HAMAP-Rule" id="MF_01321"/>
    </source>
</evidence>
<evidence type="ECO:0000305" key="2"/>
<accession>P0C503</accession>
<accession>P12091</accession>
<accession>Q6QXV7</accession>
<accession>Q6QY83</accession>
<dbReference type="EC" id="2.7.7.6" evidence="1"/>
<dbReference type="EMBL" id="X15901">
    <property type="protein sequence ID" value="CAA33986.1"/>
    <property type="molecule type" value="Genomic_DNA"/>
</dbReference>
<dbReference type="EMBL" id="AY522330">
    <property type="protein sequence ID" value="AAS46111.1"/>
    <property type="status" value="ALT_INIT"/>
    <property type="molecule type" value="Genomic_DNA"/>
</dbReference>
<dbReference type="PIR" id="JQ0213">
    <property type="entry name" value="RNRZB"/>
</dbReference>
<dbReference type="RefSeq" id="NP_039373.1">
    <property type="nucleotide sequence ID" value="NC_001320.1"/>
</dbReference>
<dbReference type="SMR" id="P0C503"/>
<dbReference type="FunCoup" id="P0C503">
    <property type="interactions" value="209"/>
</dbReference>
<dbReference type="STRING" id="39947.P0C503"/>
<dbReference type="PaxDb" id="39947-P0C503"/>
<dbReference type="EnsemblPlants" id="transcript-rpoB">
    <property type="protein sequence ID" value="cds-CAA33986.1"/>
    <property type="gene ID" value="gene-rpoB"/>
</dbReference>
<dbReference type="GeneID" id="3131432"/>
<dbReference type="Gramene" id="transcript-rpoB">
    <property type="protein sequence ID" value="cds-CAA33986.1"/>
    <property type="gene ID" value="gene-rpoB"/>
</dbReference>
<dbReference type="KEGG" id="dosa:rpoB"/>
<dbReference type="KEGG" id="osa:3131432"/>
<dbReference type="InParanoid" id="P0C503"/>
<dbReference type="OrthoDB" id="5869532at2759"/>
<dbReference type="Proteomes" id="UP000059680">
    <property type="component" value="Chloroplast"/>
</dbReference>
<dbReference type="GO" id="GO:0009507">
    <property type="term" value="C:chloroplast"/>
    <property type="evidence" value="ECO:0007669"/>
    <property type="project" value="UniProtKB-SubCell"/>
</dbReference>
<dbReference type="GO" id="GO:0000428">
    <property type="term" value="C:DNA-directed RNA polymerase complex"/>
    <property type="evidence" value="ECO:0007669"/>
    <property type="project" value="UniProtKB-KW"/>
</dbReference>
<dbReference type="GO" id="GO:0005739">
    <property type="term" value="C:mitochondrion"/>
    <property type="evidence" value="ECO:0007669"/>
    <property type="project" value="GOC"/>
</dbReference>
<dbReference type="GO" id="GO:0009536">
    <property type="term" value="C:plastid"/>
    <property type="evidence" value="ECO:0000305"/>
    <property type="project" value="Gramene"/>
</dbReference>
<dbReference type="GO" id="GO:0003677">
    <property type="term" value="F:DNA binding"/>
    <property type="evidence" value="ECO:0007669"/>
    <property type="project" value="UniProtKB-UniRule"/>
</dbReference>
<dbReference type="GO" id="GO:0003899">
    <property type="term" value="F:DNA-directed RNA polymerase activity"/>
    <property type="evidence" value="ECO:0007669"/>
    <property type="project" value="UniProtKB-UniRule"/>
</dbReference>
<dbReference type="GO" id="GO:0032549">
    <property type="term" value="F:ribonucleoside binding"/>
    <property type="evidence" value="ECO:0007669"/>
    <property type="project" value="InterPro"/>
</dbReference>
<dbReference type="GO" id="GO:0006351">
    <property type="term" value="P:DNA-templated transcription"/>
    <property type="evidence" value="ECO:0007669"/>
    <property type="project" value="UniProtKB-UniRule"/>
</dbReference>
<dbReference type="CDD" id="cd00653">
    <property type="entry name" value="RNA_pol_B_RPB2"/>
    <property type="match status" value="1"/>
</dbReference>
<dbReference type="Gene3D" id="2.40.50.100">
    <property type="match status" value="1"/>
</dbReference>
<dbReference type="Gene3D" id="2.40.50.150">
    <property type="match status" value="1"/>
</dbReference>
<dbReference type="Gene3D" id="3.90.1100.10">
    <property type="match status" value="1"/>
</dbReference>
<dbReference type="Gene3D" id="2.30.150.10">
    <property type="entry name" value="DNA-directed RNA polymerase, beta subunit, external 1 domain"/>
    <property type="match status" value="1"/>
</dbReference>
<dbReference type="Gene3D" id="2.40.270.10">
    <property type="entry name" value="DNA-directed RNA polymerase, subunit 2, domain 6"/>
    <property type="match status" value="2"/>
</dbReference>
<dbReference type="Gene3D" id="3.90.1800.10">
    <property type="entry name" value="RNA polymerase alpha subunit dimerisation domain"/>
    <property type="match status" value="1"/>
</dbReference>
<dbReference type="Gene3D" id="3.90.1110.10">
    <property type="entry name" value="RNA polymerase Rpb2, domain 2"/>
    <property type="match status" value="1"/>
</dbReference>
<dbReference type="HAMAP" id="MF_01321">
    <property type="entry name" value="RNApol_bact_RpoB"/>
    <property type="match status" value="1"/>
</dbReference>
<dbReference type="InterPro" id="IPR042107">
    <property type="entry name" value="DNA-dir_RNA_pol_bsu_ext_1_sf"/>
</dbReference>
<dbReference type="InterPro" id="IPR015712">
    <property type="entry name" value="DNA-dir_RNA_pol_su2"/>
</dbReference>
<dbReference type="InterPro" id="IPR007120">
    <property type="entry name" value="DNA-dir_RNAP_su2_dom"/>
</dbReference>
<dbReference type="InterPro" id="IPR037033">
    <property type="entry name" value="DNA-dir_RNAP_su2_hyb_sf"/>
</dbReference>
<dbReference type="InterPro" id="IPR010243">
    <property type="entry name" value="RNA_pol_bsu_bac"/>
</dbReference>
<dbReference type="InterPro" id="IPR007121">
    <property type="entry name" value="RNA_pol_bsu_CS"/>
</dbReference>
<dbReference type="InterPro" id="IPR007642">
    <property type="entry name" value="RNA_pol_Rpb2_2"/>
</dbReference>
<dbReference type="InterPro" id="IPR037034">
    <property type="entry name" value="RNA_pol_Rpb2_2_sf"/>
</dbReference>
<dbReference type="InterPro" id="IPR007645">
    <property type="entry name" value="RNA_pol_Rpb2_3"/>
</dbReference>
<dbReference type="InterPro" id="IPR007641">
    <property type="entry name" value="RNA_pol_Rpb2_7"/>
</dbReference>
<dbReference type="InterPro" id="IPR014724">
    <property type="entry name" value="RNA_pol_RPB2_OB-fold"/>
</dbReference>
<dbReference type="NCBIfam" id="NF001616">
    <property type="entry name" value="PRK00405.1"/>
    <property type="match status" value="1"/>
</dbReference>
<dbReference type="PANTHER" id="PTHR20856">
    <property type="entry name" value="DNA-DIRECTED RNA POLYMERASE I SUBUNIT 2"/>
    <property type="match status" value="1"/>
</dbReference>
<dbReference type="Pfam" id="PF04561">
    <property type="entry name" value="RNA_pol_Rpb2_2"/>
    <property type="match status" value="1"/>
</dbReference>
<dbReference type="Pfam" id="PF04565">
    <property type="entry name" value="RNA_pol_Rpb2_3"/>
    <property type="match status" value="1"/>
</dbReference>
<dbReference type="Pfam" id="PF00562">
    <property type="entry name" value="RNA_pol_Rpb2_6"/>
    <property type="match status" value="1"/>
</dbReference>
<dbReference type="Pfam" id="PF04560">
    <property type="entry name" value="RNA_pol_Rpb2_7"/>
    <property type="match status" value="1"/>
</dbReference>
<dbReference type="SUPFAM" id="SSF64484">
    <property type="entry name" value="beta and beta-prime subunits of DNA dependent RNA-polymerase"/>
    <property type="match status" value="1"/>
</dbReference>
<dbReference type="PROSITE" id="PS01166">
    <property type="entry name" value="RNA_POL_BETA"/>
    <property type="match status" value="1"/>
</dbReference>
<comment type="function">
    <text evidence="1">DNA-dependent RNA polymerase catalyzes the transcription of DNA into RNA using the four ribonucleoside triphosphates as substrates.</text>
</comment>
<comment type="catalytic activity">
    <reaction evidence="1">
        <text>RNA(n) + a ribonucleoside 5'-triphosphate = RNA(n+1) + diphosphate</text>
        <dbReference type="Rhea" id="RHEA:21248"/>
        <dbReference type="Rhea" id="RHEA-COMP:14527"/>
        <dbReference type="Rhea" id="RHEA-COMP:17342"/>
        <dbReference type="ChEBI" id="CHEBI:33019"/>
        <dbReference type="ChEBI" id="CHEBI:61557"/>
        <dbReference type="ChEBI" id="CHEBI:140395"/>
        <dbReference type="EC" id="2.7.7.6"/>
    </reaction>
</comment>
<comment type="subunit">
    <text evidence="1">In plastids the minimal PEP RNA polymerase catalytic core is composed of four subunits: alpha, beta, beta', and beta''. When a (nuclear-encoded) sigma factor is associated with the core the holoenzyme is formed, which can initiate transcription.</text>
</comment>
<comment type="subcellular location">
    <subcellularLocation>
        <location>Plastid</location>
        <location>Chloroplast</location>
    </subcellularLocation>
</comment>
<comment type="similarity">
    <text evidence="1">Belongs to the RNA polymerase beta chain family.</text>
</comment>
<comment type="sequence caution" evidence="2">
    <conflict type="erroneous initiation">
        <sequence resource="EMBL-CDS" id="AAS46111"/>
    </conflict>
</comment>
<proteinExistence type="inferred from homology"/>
<sequence>MLRNGNEGMSTIPGFSQIQFEGFCRFINQGLAEELEKFPTIKDPDHEISFQLFAKGYQLLEPSIKERDAVYESLTYSSELYVSARLIFGFDVQKQTISIGNIPIMNSLGTFIINGIYRIVINQILLSPGIYYRSELDHKGISIYTGTIISDWGGRSELAIDKKERIWARVSRKQKISILVLSSAMGSNLKEILDNVSYPEIFLSFPNAKEKKRIESKEKAILEFYQQFACVGGDLVFSESLCEELQKKFFQQKCELGRIGRRNMNRRLNLDIPQNSTFLLPRDVLAATDHLIGMKFETGILDDDDMNHLKNKRIRSVADLLQDQFGLALGRLQHAVQKTIRRVFIRQSKPTPQTLVTPTSTSILLITTYETFFGTYPLSQVFDQTNPLTQTVHGRKVSCLGPGGLTGRTASFRSRDIHPSHYGRICPIDTSEGINVGLTGSLAIHARIDHWWGSVESPFYEISEKAKKKKERQVVYLSPNRDEYYMIAAGNSLSLNRGIQEEQVVPARYRQEFLTIAWEQIHVRSIFPFQYFSIGGSLIPFIEHNDANRALMSSNMQRQAVPLSRSEKCIVGTGLERQTALDSRVSVIAEREGKIISTNSHKILLSSSGKTISIPLVTHRRSNKNTCMHQKPRVPRGKSIKKGQILAEGAATVGGELALGKNVLVAYMPWEGYNFEDAVLISERLVYEDIYTSFHIRKYEIQTDTTSQGSAEKITKEIPHLEEHLLRNLDRNGVVKLGSWVETGDILVGKLTPQIASESSYIAEAGLLRAIFGLEVSTSKETSLKLPIGGRGRVIDVKWIQRDPLDIMVRVYILQKREIKVGDKVAGRHGNKGIISKILPRQDMPYLQDGTPVDMVFNPLGVPSRMNVGQIFESSLGLAGDLLKKHYRIAPFDERYEQEASRKLVFSELYEASKQTKNPWVFEPEYPGKSRIFDGRTGDPFEQPVLIGKSYILKLIHQVDEKIHGRSTGPYSLVTQQPVRGRAKQGGQRIGEMEVWALEGFGVAHILQEILTYKSDHLIARQEILNATIWGKRVPNHEDPPESFRVLVRELRSLALELNHFLVSQKNFQVNREEV</sequence>
<reference key="1">
    <citation type="journal article" date="1989" name="Mol. Gen. Genet.">
        <title>The complete sequence of the rice (Oryza sativa) chloroplast genome: intermolecular recombination between distinct tRNA genes accounts for a major plastid DNA inversion during the evolution of the cereals.</title>
        <authorList>
            <person name="Hiratsuka J."/>
            <person name="Shimada H."/>
            <person name="Whittier R."/>
            <person name="Ishibashi T."/>
            <person name="Sakamoto M."/>
            <person name="Mori M."/>
            <person name="Kondo C."/>
            <person name="Honji Y."/>
            <person name="Sun C.-R."/>
            <person name="Meng B.-Y."/>
            <person name="Li Y.-Q."/>
            <person name="Kanno A."/>
            <person name="Nishizawa Y."/>
            <person name="Hirai A."/>
            <person name="Shinozaki K."/>
            <person name="Sugiura M."/>
        </authorList>
    </citation>
    <scope>NUCLEOTIDE SEQUENCE [LARGE SCALE GENOMIC DNA]</scope>
    <source>
        <strain>cv. Nipponbare</strain>
    </source>
</reference>
<reference key="2">
    <citation type="journal article" date="2004" name="Plant Physiol.">
        <title>A comparison of rice chloroplast genomes.</title>
        <authorList>
            <person name="Tang J."/>
            <person name="Xia H."/>
            <person name="Cao M."/>
            <person name="Zhang X."/>
            <person name="Zeng W."/>
            <person name="Hu S."/>
            <person name="Tong W."/>
            <person name="Wang J."/>
            <person name="Wang J."/>
            <person name="Yu J."/>
            <person name="Yang H."/>
            <person name="Zhu L."/>
        </authorList>
    </citation>
    <scope>NUCLEOTIDE SEQUENCE [LARGE SCALE GENOMIC DNA]</scope>
    <source>
        <strain>cv. Nipponbare</strain>
    </source>
</reference>